<feature type="chain" id="PRO_0000061682" description="Cytochrome b">
    <location>
        <begin position="1"/>
        <end position="379"/>
    </location>
</feature>
<feature type="transmembrane region" description="Helical" evidence="2">
    <location>
        <begin position="33"/>
        <end position="53"/>
    </location>
</feature>
<feature type="transmembrane region" description="Helical" evidence="2">
    <location>
        <begin position="77"/>
        <end position="98"/>
    </location>
</feature>
<feature type="transmembrane region" description="Helical" evidence="2">
    <location>
        <begin position="113"/>
        <end position="133"/>
    </location>
</feature>
<feature type="transmembrane region" description="Helical" evidence="2">
    <location>
        <begin position="178"/>
        <end position="198"/>
    </location>
</feature>
<feature type="transmembrane region" description="Helical" evidence="2">
    <location>
        <begin position="226"/>
        <end position="246"/>
    </location>
</feature>
<feature type="transmembrane region" description="Helical" evidence="2">
    <location>
        <begin position="288"/>
        <end position="308"/>
    </location>
</feature>
<feature type="transmembrane region" description="Helical" evidence="2">
    <location>
        <begin position="320"/>
        <end position="340"/>
    </location>
</feature>
<feature type="transmembrane region" description="Helical" evidence="2">
    <location>
        <begin position="347"/>
        <end position="367"/>
    </location>
</feature>
<feature type="binding site" description="axial binding residue" evidence="2">
    <location>
        <position position="83"/>
    </location>
    <ligand>
        <name>heme b</name>
        <dbReference type="ChEBI" id="CHEBI:60344"/>
        <label>b562</label>
    </ligand>
    <ligandPart>
        <name>Fe</name>
        <dbReference type="ChEBI" id="CHEBI:18248"/>
    </ligandPart>
</feature>
<feature type="binding site" description="axial binding residue" evidence="2">
    <location>
        <position position="97"/>
    </location>
    <ligand>
        <name>heme b</name>
        <dbReference type="ChEBI" id="CHEBI:60344"/>
        <label>b566</label>
    </ligand>
    <ligandPart>
        <name>Fe</name>
        <dbReference type="ChEBI" id="CHEBI:18248"/>
    </ligandPart>
</feature>
<feature type="binding site" description="axial binding residue" evidence="2">
    <location>
        <position position="182"/>
    </location>
    <ligand>
        <name>heme b</name>
        <dbReference type="ChEBI" id="CHEBI:60344"/>
        <label>b562</label>
    </ligand>
    <ligandPart>
        <name>Fe</name>
        <dbReference type="ChEBI" id="CHEBI:18248"/>
    </ligandPart>
</feature>
<feature type="binding site" description="axial binding residue" evidence="2">
    <location>
        <position position="196"/>
    </location>
    <ligand>
        <name>heme b</name>
        <dbReference type="ChEBI" id="CHEBI:60344"/>
        <label>b566</label>
    </ligand>
    <ligandPart>
        <name>Fe</name>
        <dbReference type="ChEBI" id="CHEBI:18248"/>
    </ligandPart>
</feature>
<feature type="binding site" evidence="2">
    <location>
        <position position="201"/>
    </location>
    <ligand>
        <name>a ubiquinone</name>
        <dbReference type="ChEBI" id="CHEBI:16389"/>
    </ligand>
</feature>
<comment type="function">
    <text evidence="2">Component of the ubiquinol-cytochrome c reductase complex (complex III or cytochrome b-c1 complex) that is part of the mitochondrial respiratory chain. The b-c1 complex mediates electron transfer from ubiquinol to cytochrome c. Contributes to the generation of a proton gradient across the mitochondrial membrane that is then used for ATP synthesis.</text>
</comment>
<comment type="cofactor">
    <cofactor evidence="2">
        <name>heme b</name>
        <dbReference type="ChEBI" id="CHEBI:60344"/>
    </cofactor>
    <text evidence="2">Binds 2 heme b groups non-covalently.</text>
</comment>
<comment type="subunit">
    <text evidence="2">The cytochrome bc1 complex contains 11 subunits: 3 respiratory subunits (MT-CYB, CYC1 and UQCRFS1), 2 core proteins (UQCRC1 and UQCRC2) and 6 low-molecular weight proteins (UQCRH/QCR6, UQCRB/QCR7, UQCRQ/QCR8, UQCR10/QCR9, UQCR11/QCR10 and a cleavage product of UQCRFS1). This cytochrome bc1 complex then forms a dimer.</text>
</comment>
<comment type="subcellular location">
    <subcellularLocation>
        <location evidence="2">Mitochondrion inner membrane</location>
        <topology evidence="2">Multi-pass membrane protein</topology>
    </subcellularLocation>
</comment>
<comment type="miscellaneous">
    <text evidence="1">Heme 1 (or BL or b562) is low-potential and absorbs at about 562 nm, and heme 2 (or BH or b566) is high-potential and absorbs at about 566 nm.</text>
</comment>
<comment type="similarity">
    <text evidence="3 4">Belongs to the cytochrome b family.</text>
</comment>
<comment type="caution">
    <text evidence="2">The full-length protein contains only eight transmembrane helices, not nine as predicted by bioinformatics tools.</text>
</comment>
<protein>
    <recommendedName>
        <fullName>Cytochrome b</fullName>
    </recommendedName>
    <alternativeName>
        <fullName>Complex III subunit 3</fullName>
    </alternativeName>
    <alternativeName>
        <fullName>Complex III subunit III</fullName>
    </alternativeName>
    <alternativeName>
        <fullName>Cytochrome b-c1 complex subunit 3</fullName>
    </alternativeName>
    <alternativeName>
        <fullName>Ubiquinol-cytochrome-c reductase complex cytochrome b subunit</fullName>
    </alternativeName>
</protein>
<sequence>MTNIRKSHPLMKIVNNAFIDLPAPSNISSWWNFGSLLGICLILQILTGLFLAMHYTSDTMTAFSSVTHICRDVNHGWIIRYMHANGASMFFICLYMHVGRGMYYGSYTFLETWNIGVILLFTVMATAFMGYVLPWGQMSFWGATVITNLLSAIPYIGTSLVEWIWGGFSVDKATLTRFFAFHFILPFIIAALAMVHLLFLHETGSNNPTGIPSDMDKIPFHPYYTIKDILGALLLILILMLLVLFAPDLLGDPDNYTPANPLNTPPHIKPEWYFLFAYAILRSIPNKLGGVLALVFSILILILMPLLHTSKQRSMMFRPLSQCLFWILAADLLTLTWIGGQPVEHPYIIIGQLASIMYFLIILVLMPATSMIENSFLKW</sequence>
<geneLocation type="mitochondrion"/>
<gene>
    <name type="primary">MT-CYB</name>
    <name type="synonym">COB</name>
    <name type="synonym">CYTB</name>
    <name type="synonym">MTCYB</name>
</gene>
<proteinExistence type="inferred from homology"/>
<dbReference type="EMBL" id="AF036277">
    <property type="protein sequence ID" value="AAD51428.1"/>
    <property type="molecule type" value="Genomic_DNA"/>
</dbReference>
<dbReference type="RefSeq" id="YP_007626731.1">
    <property type="nucleotide sequence ID" value="NC_020751.1"/>
</dbReference>
<dbReference type="SMR" id="Q9T9B7"/>
<dbReference type="GeneID" id="15089110"/>
<dbReference type="CTD" id="4519"/>
<dbReference type="GO" id="GO:0005743">
    <property type="term" value="C:mitochondrial inner membrane"/>
    <property type="evidence" value="ECO:0007669"/>
    <property type="project" value="UniProtKB-SubCell"/>
</dbReference>
<dbReference type="GO" id="GO:0045275">
    <property type="term" value="C:respiratory chain complex III"/>
    <property type="evidence" value="ECO:0007669"/>
    <property type="project" value="InterPro"/>
</dbReference>
<dbReference type="GO" id="GO:0046872">
    <property type="term" value="F:metal ion binding"/>
    <property type="evidence" value="ECO:0007669"/>
    <property type="project" value="UniProtKB-KW"/>
</dbReference>
<dbReference type="GO" id="GO:0008121">
    <property type="term" value="F:ubiquinol-cytochrome-c reductase activity"/>
    <property type="evidence" value="ECO:0007669"/>
    <property type="project" value="InterPro"/>
</dbReference>
<dbReference type="GO" id="GO:0006122">
    <property type="term" value="P:mitochondrial electron transport, ubiquinol to cytochrome c"/>
    <property type="evidence" value="ECO:0007669"/>
    <property type="project" value="TreeGrafter"/>
</dbReference>
<dbReference type="CDD" id="cd00290">
    <property type="entry name" value="cytochrome_b_C"/>
    <property type="match status" value="1"/>
</dbReference>
<dbReference type="CDD" id="cd00284">
    <property type="entry name" value="Cytochrome_b_N"/>
    <property type="match status" value="1"/>
</dbReference>
<dbReference type="FunFam" id="1.20.810.10:FF:000002">
    <property type="entry name" value="Cytochrome b"/>
    <property type="match status" value="1"/>
</dbReference>
<dbReference type="Gene3D" id="1.20.810.10">
    <property type="entry name" value="Cytochrome Bc1 Complex, Chain C"/>
    <property type="match status" value="1"/>
</dbReference>
<dbReference type="InterPro" id="IPR005798">
    <property type="entry name" value="Cyt_b/b6_C"/>
</dbReference>
<dbReference type="InterPro" id="IPR036150">
    <property type="entry name" value="Cyt_b/b6_C_sf"/>
</dbReference>
<dbReference type="InterPro" id="IPR005797">
    <property type="entry name" value="Cyt_b/b6_N"/>
</dbReference>
<dbReference type="InterPro" id="IPR027387">
    <property type="entry name" value="Cytb/b6-like_sf"/>
</dbReference>
<dbReference type="InterPro" id="IPR030689">
    <property type="entry name" value="Cytochrome_b"/>
</dbReference>
<dbReference type="InterPro" id="IPR048260">
    <property type="entry name" value="Cytochrome_b_C_euk/bac"/>
</dbReference>
<dbReference type="InterPro" id="IPR048259">
    <property type="entry name" value="Cytochrome_b_N_euk/bac"/>
</dbReference>
<dbReference type="InterPro" id="IPR016174">
    <property type="entry name" value="Di-haem_cyt_TM"/>
</dbReference>
<dbReference type="PANTHER" id="PTHR19271">
    <property type="entry name" value="CYTOCHROME B"/>
    <property type="match status" value="1"/>
</dbReference>
<dbReference type="PANTHER" id="PTHR19271:SF16">
    <property type="entry name" value="CYTOCHROME B"/>
    <property type="match status" value="1"/>
</dbReference>
<dbReference type="Pfam" id="PF00032">
    <property type="entry name" value="Cytochrom_B_C"/>
    <property type="match status" value="1"/>
</dbReference>
<dbReference type="Pfam" id="PF00033">
    <property type="entry name" value="Cytochrome_B"/>
    <property type="match status" value="1"/>
</dbReference>
<dbReference type="PIRSF" id="PIRSF038885">
    <property type="entry name" value="COB"/>
    <property type="match status" value="1"/>
</dbReference>
<dbReference type="SUPFAM" id="SSF81648">
    <property type="entry name" value="a domain/subunit of cytochrome bc1 complex (Ubiquinol-cytochrome c reductase)"/>
    <property type="match status" value="1"/>
</dbReference>
<dbReference type="SUPFAM" id="SSF81342">
    <property type="entry name" value="Transmembrane di-heme cytochromes"/>
    <property type="match status" value="1"/>
</dbReference>
<dbReference type="PROSITE" id="PS51003">
    <property type="entry name" value="CYTB_CTER"/>
    <property type="match status" value="1"/>
</dbReference>
<dbReference type="PROSITE" id="PS51002">
    <property type="entry name" value="CYTB_NTER"/>
    <property type="match status" value="1"/>
</dbReference>
<accession>Q9T9B7</accession>
<evidence type="ECO:0000250" key="1"/>
<evidence type="ECO:0000250" key="2">
    <source>
        <dbReference type="UniProtKB" id="P00157"/>
    </source>
</evidence>
<evidence type="ECO:0000255" key="3">
    <source>
        <dbReference type="PROSITE-ProRule" id="PRU00967"/>
    </source>
</evidence>
<evidence type="ECO:0000255" key="4">
    <source>
        <dbReference type="PROSITE-ProRule" id="PRU00968"/>
    </source>
</evidence>
<organism>
    <name type="scientific">Tragelaphus scriptus</name>
    <name type="common">Bushbuck</name>
    <dbReference type="NCBI Taxonomy" id="66440"/>
    <lineage>
        <taxon>Eukaryota</taxon>
        <taxon>Metazoa</taxon>
        <taxon>Chordata</taxon>
        <taxon>Craniata</taxon>
        <taxon>Vertebrata</taxon>
        <taxon>Euteleostomi</taxon>
        <taxon>Mammalia</taxon>
        <taxon>Eutheria</taxon>
        <taxon>Laurasiatheria</taxon>
        <taxon>Artiodactyla</taxon>
        <taxon>Ruminantia</taxon>
        <taxon>Pecora</taxon>
        <taxon>Bovidae</taxon>
        <taxon>Bovinae</taxon>
        <taxon>Tragelaphus</taxon>
    </lineage>
</organism>
<name>CYB_TRASR</name>
<reference key="1">
    <citation type="journal article" date="1999" name="Mol. Phylogenet. Evol.">
        <title>The tribal radiation of the family Bovidae (Artiodactyla) and the evolution of the mitochondrial cytochrome b gene.</title>
        <authorList>
            <person name="Hassanin A."/>
            <person name="Douzery E.J.P."/>
        </authorList>
    </citation>
    <scope>NUCLEOTIDE SEQUENCE [GENOMIC DNA]</scope>
</reference>
<keyword id="KW-0249">Electron transport</keyword>
<keyword id="KW-0349">Heme</keyword>
<keyword id="KW-0408">Iron</keyword>
<keyword id="KW-0472">Membrane</keyword>
<keyword id="KW-0479">Metal-binding</keyword>
<keyword id="KW-0496">Mitochondrion</keyword>
<keyword id="KW-0999">Mitochondrion inner membrane</keyword>
<keyword id="KW-0679">Respiratory chain</keyword>
<keyword id="KW-0812">Transmembrane</keyword>
<keyword id="KW-1133">Transmembrane helix</keyword>
<keyword id="KW-0813">Transport</keyword>
<keyword id="KW-0830">Ubiquinone</keyword>